<comment type="function">
    <text evidence="1">Fluoride-specific ion channel. Important for reducing fluoride concentration in the cell, thus reducing its toxicity.</text>
</comment>
<comment type="catalytic activity">
    <reaction evidence="1">
        <text>fluoride(in) = fluoride(out)</text>
        <dbReference type="Rhea" id="RHEA:76159"/>
        <dbReference type="ChEBI" id="CHEBI:17051"/>
    </reaction>
    <physiologicalReaction direction="left-to-right" evidence="1">
        <dbReference type="Rhea" id="RHEA:76160"/>
    </physiologicalReaction>
</comment>
<comment type="activity regulation">
    <text evidence="1">Na(+) is not transported, but it plays an essential structural role and its presence is essential for fluoride channel function.</text>
</comment>
<comment type="subcellular location">
    <subcellularLocation>
        <location evidence="1">Cell inner membrane</location>
        <topology evidence="1">Multi-pass membrane protein</topology>
    </subcellularLocation>
</comment>
<comment type="similarity">
    <text evidence="1">Belongs to the fluoride channel Fluc/FEX (TC 1.A.43) family.</text>
</comment>
<protein>
    <recommendedName>
        <fullName evidence="1">Fluoride-specific ion channel FluC</fullName>
    </recommendedName>
</protein>
<gene>
    <name evidence="1" type="primary">fluC</name>
    <name evidence="1" type="synonym">crcB</name>
    <name type="ordered locus">Aave_3300</name>
</gene>
<sequence>MLLNIAVICLAACVGALMRWGFALWLNPGGLIPWGTLAVNLIGGYCIGIALAVFTSRPDIDPAWRLLVITGFLGTLTTFSSFSGEVVTMLMQQRFGLAFGTIALHLGGSLALTWAGMRSALWWLAR</sequence>
<feature type="chain" id="PRO_1000060311" description="Fluoride-specific ion channel FluC">
    <location>
        <begin position="1"/>
        <end position="126"/>
    </location>
</feature>
<feature type="transmembrane region" description="Helical" evidence="1">
    <location>
        <begin position="5"/>
        <end position="25"/>
    </location>
</feature>
<feature type="transmembrane region" description="Helical" evidence="1">
    <location>
        <begin position="34"/>
        <end position="54"/>
    </location>
</feature>
<feature type="transmembrane region" description="Helical" evidence="1">
    <location>
        <begin position="67"/>
        <end position="87"/>
    </location>
</feature>
<feature type="transmembrane region" description="Helical" evidence="1">
    <location>
        <begin position="95"/>
        <end position="115"/>
    </location>
</feature>
<feature type="binding site" evidence="1">
    <location>
        <position position="74"/>
    </location>
    <ligand>
        <name>Na(+)</name>
        <dbReference type="ChEBI" id="CHEBI:29101"/>
        <note>structural</note>
    </ligand>
</feature>
<feature type="binding site" evidence="1">
    <location>
        <position position="77"/>
    </location>
    <ligand>
        <name>Na(+)</name>
        <dbReference type="ChEBI" id="CHEBI:29101"/>
        <note>structural</note>
    </ligand>
</feature>
<keyword id="KW-0997">Cell inner membrane</keyword>
<keyword id="KW-1003">Cell membrane</keyword>
<keyword id="KW-0407">Ion channel</keyword>
<keyword id="KW-0406">Ion transport</keyword>
<keyword id="KW-0472">Membrane</keyword>
<keyword id="KW-0479">Metal-binding</keyword>
<keyword id="KW-0915">Sodium</keyword>
<keyword id="KW-0812">Transmembrane</keyword>
<keyword id="KW-1133">Transmembrane helix</keyword>
<keyword id="KW-0813">Transport</keyword>
<dbReference type="EMBL" id="CP000512">
    <property type="protein sequence ID" value="ABM33860.1"/>
    <property type="molecule type" value="Genomic_DNA"/>
</dbReference>
<dbReference type="RefSeq" id="WP_011796365.1">
    <property type="nucleotide sequence ID" value="NC_008752.1"/>
</dbReference>
<dbReference type="SMR" id="A1TSC2"/>
<dbReference type="STRING" id="397945.Aave_3300"/>
<dbReference type="GeneID" id="79792989"/>
<dbReference type="KEGG" id="aav:Aave_3300"/>
<dbReference type="eggNOG" id="COG0239">
    <property type="taxonomic scope" value="Bacteria"/>
</dbReference>
<dbReference type="HOGENOM" id="CLU_114342_3_3_4"/>
<dbReference type="OrthoDB" id="9806299at2"/>
<dbReference type="Proteomes" id="UP000002596">
    <property type="component" value="Chromosome"/>
</dbReference>
<dbReference type="GO" id="GO:0005886">
    <property type="term" value="C:plasma membrane"/>
    <property type="evidence" value="ECO:0007669"/>
    <property type="project" value="UniProtKB-SubCell"/>
</dbReference>
<dbReference type="GO" id="GO:0062054">
    <property type="term" value="F:fluoride channel activity"/>
    <property type="evidence" value="ECO:0007669"/>
    <property type="project" value="UniProtKB-UniRule"/>
</dbReference>
<dbReference type="GO" id="GO:0046872">
    <property type="term" value="F:metal ion binding"/>
    <property type="evidence" value="ECO:0007669"/>
    <property type="project" value="UniProtKB-KW"/>
</dbReference>
<dbReference type="GO" id="GO:0140114">
    <property type="term" value="P:cellular detoxification of fluoride"/>
    <property type="evidence" value="ECO:0007669"/>
    <property type="project" value="UniProtKB-UniRule"/>
</dbReference>
<dbReference type="HAMAP" id="MF_00454">
    <property type="entry name" value="FluC"/>
    <property type="match status" value="1"/>
</dbReference>
<dbReference type="InterPro" id="IPR003691">
    <property type="entry name" value="FluC"/>
</dbReference>
<dbReference type="NCBIfam" id="TIGR00494">
    <property type="entry name" value="crcB"/>
    <property type="match status" value="1"/>
</dbReference>
<dbReference type="NCBIfam" id="NF010792">
    <property type="entry name" value="PRK14196.1"/>
    <property type="match status" value="1"/>
</dbReference>
<dbReference type="PANTHER" id="PTHR28259">
    <property type="entry name" value="FLUORIDE EXPORT PROTEIN 1-RELATED"/>
    <property type="match status" value="1"/>
</dbReference>
<dbReference type="PANTHER" id="PTHR28259:SF1">
    <property type="entry name" value="FLUORIDE EXPORT PROTEIN 1-RELATED"/>
    <property type="match status" value="1"/>
</dbReference>
<dbReference type="Pfam" id="PF02537">
    <property type="entry name" value="CRCB"/>
    <property type="match status" value="1"/>
</dbReference>
<evidence type="ECO:0000255" key="1">
    <source>
        <dbReference type="HAMAP-Rule" id="MF_00454"/>
    </source>
</evidence>
<name>FLUC_PARC0</name>
<proteinExistence type="inferred from homology"/>
<organism>
    <name type="scientific">Paracidovorax citrulli (strain AAC00-1)</name>
    <name type="common">Acidovorax citrulli</name>
    <dbReference type="NCBI Taxonomy" id="397945"/>
    <lineage>
        <taxon>Bacteria</taxon>
        <taxon>Pseudomonadati</taxon>
        <taxon>Pseudomonadota</taxon>
        <taxon>Betaproteobacteria</taxon>
        <taxon>Burkholderiales</taxon>
        <taxon>Comamonadaceae</taxon>
        <taxon>Paracidovorax</taxon>
    </lineage>
</organism>
<reference key="1">
    <citation type="submission" date="2006-12" db="EMBL/GenBank/DDBJ databases">
        <title>Complete sequence of Acidovorax avenae subsp. citrulli AAC00-1.</title>
        <authorList>
            <person name="Copeland A."/>
            <person name="Lucas S."/>
            <person name="Lapidus A."/>
            <person name="Barry K."/>
            <person name="Detter J.C."/>
            <person name="Glavina del Rio T."/>
            <person name="Dalin E."/>
            <person name="Tice H."/>
            <person name="Pitluck S."/>
            <person name="Kiss H."/>
            <person name="Brettin T."/>
            <person name="Bruce D."/>
            <person name="Han C."/>
            <person name="Tapia R."/>
            <person name="Gilna P."/>
            <person name="Schmutz J."/>
            <person name="Larimer F."/>
            <person name="Land M."/>
            <person name="Hauser L."/>
            <person name="Kyrpides N."/>
            <person name="Kim E."/>
            <person name="Stahl D."/>
            <person name="Richardson P."/>
        </authorList>
    </citation>
    <scope>NUCLEOTIDE SEQUENCE [LARGE SCALE GENOMIC DNA]</scope>
    <source>
        <strain>AAC00-1</strain>
    </source>
</reference>
<accession>A1TSC2</accession>